<organism>
    <name type="scientific">Thiomonas arsenitoxydans (strain DSM 22701 / CIP 110005 / 3As)</name>
    <dbReference type="NCBI Taxonomy" id="426114"/>
    <lineage>
        <taxon>Bacteria</taxon>
        <taxon>Pseudomonadati</taxon>
        <taxon>Pseudomonadota</taxon>
        <taxon>Betaproteobacteria</taxon>
        <taxon>Burkholderiales</taxon>
        <taxon>Thiomonas</taxon>
    </lineage>
</organism>
<sequence>MSSYAPREIPLDIRLMQGTSRALFWLVALGCLFVAGHWLMQRNWWDIRAVRLQGDLQRISPVTVRAEALPQLRGNFLTINLAQAQRVFESLPWVRTAVVQRLWPMQLAVTLQAQQPVAIWREPGSAAQLVNTQGQAFTANLGEVQGLGLPQLSGPAGTSAQVLQMSQKLQPLMQEFHQTVATLAQGSGGNWSVQTRSGLSIDLGSAPDSAATQTRLKQFMTLMPQLEARYGRSIDSVDLRYPNGFAVHLQGVDLPGMNKTSNKTPQPAGRKD</sequence>
<comment type="function">
    <text evidence="1">Essential cell division protein. May link together the upstream cell division proteins, which are predominantly cytoplasmic, with the downstream cell division proteins, which are predominantly periplasmic. May control correct divisome assembly.</text>
</comment>
<comment type="subunit">
    <text evidence="1">Part of a complex composed of FtsB, FtsL and FtsQ.</text>
</comment>
<comment type="subcellular location">
    <subcellularLocation>
        <location evidence="1">Cell inner membrane</location>
        <topology evidence="1">Single-pass type II membrane protein</topology>
    </subcellularLocation>
    <text evidence="1">Localizes to the division septum.</text>
</comment>
<comment type="similarity">
    <text evidence="1">Belongs to the FtsQ/DivIB family. FtsQ subfamily.</text>
</comment>
<dbReference type="EMBL" id="FP475956">
    <property type="protein sequence ID" value="CAZ87155.1"/>
    <property type="molecule type" value="Genomic_DNA"/>
</dbReference>
<dbReference type="RefSeq" id="WP_013104537.1">
    <property type="nucleotide sequence ID" value="NC_014145.1"/>
</dbReference>
<dbReference type="SMR" id="D6CRB4"/>
<dbReference type="KEGG" id="thi:THI_0405"/>
<dbReference type="eggNOG" id="COG1589">
    <property type="taxonomic scope" value="Bacteria"/>
</dbReference>
<dbReference type="HOGENOM" id="CLU_064041_0_0_4"/>
<dbReference type="OrthoDB" id="9790370at2"/>
<dbReference type="Proteomes" id="UP000002372">
    <property type="component" value="Chromosome"/>
</dbReference>
<dbReference type="GO" id="GO:0032153">
    <property type="term" value="C:cell division site"/>
    <property type="evidence" value="ECO:0007669"/>
    <property type="project" value="UniProtKB-UniRule"/>
</dbReference>
<dbReference type="GO" id="GO:0005886">
    <property type="term" value="C:plasma membrane"/>
    <property type="evidence" value="ECO:0007669"/>
    <property type="project" value="UniProtKB-SubCell"/>
</dbReference>
<dbReference type="GO" id="GO:0090529">
    <property type="term" value="P:cell septum assembly"/>
    <property type="evidence" value="ECO:0007669"/>
    <property type="project" value="InterPro"/>
</dbReference>
<dbReference type="GO" id="GO:0043093">
    <property type="term" value="P:FtsZ-dependent cytokinesis"/>
    <property type="evidence" value="ECO:0007669"/>
    <property type="project" value="UniProtKB-UniRule"/>
</dbReference>
<dbReference type="Gene3D" id="3.40.50.11690">
    <property type="entry name" value="Cell division protein FtsQ/DivIB"/>
    <property type="match status" value="1"/>
</dbReference>
<dbReference type="Gene3D" id="3.10.20.310">
    <property type="entry name" value="membrane protein fhac"/>
    <property type="match status" value="1"/>
</dbReference>
<dbReference type="HAMAP" id="MF_00911">
    <property type="entry name" value="FtsQ_subfam"/>
    <property type="match status" value="1"/>
</dbReference>
<dbReference type="InterPro" id="IPR005548">
    <property type="entry name" value="Cell_div_FtsQ/DivIB_C"/>
</dbReference>
<dbReference type="InterPro" id="IPR026579">
    <property type="entry name" value="FtsQ"/>
</dbReference>
<dbReference type="InterPro" id="IPR045335">
    <property type="entry name" value="FtsQ_C_sf"/>
</dbReference>
<dbReference type="InterPro" id="IPR034746">
    <property type="entry name" value="POTRA"/>
</dbReference>
<dbReference type="InterPro" id="IPR013685">
    <property type="entry name" value="POTRA_FtsQ_type"/>
</dbReference>
<dbReference type="PANTHER" id="PTHR35851">
    <property type="entry name" value="CELL DIVISION PROTEIN FTSQ"/>
    <property type="match status" value="1"/>
</dbReference>
<dbReference type="PANTHER" id="PTHR35851:SF1">
    <property type="entry name" value="CELL DIVISION PROTEIN FTSQ"/>
    <property type="match status" value="1"/>
</dbReference>
<dbReference type="Pfam" id="PF03799">
    <property type="entry name" value="FtsQ_DivIB_C"/>
    <property type="match status" value="1"/>
</dbReference>
<dbReference type="Pfam" id="PF08478">
    <property type="entry name" value="POTRA_1"/>
    <property type="match status" value="1"/>
</dbReference>
<dbReference type="PROSITE" id="PS51779">
    <property type="entry name" value="POTRA"/>
    <property type="match status" value="1"/>
</dbReference>
<gene>
    <name evidence="1" type="primary">ftsQ</name>
    <name type="ordered locus">THI_0405</name>
</gene>
<evidence type="ECO:0000255" key="1">
    <source>
        <dbReference type="HAMAP-Rule" id="MF_00911"/>
    </source>
</evidence>
<evidence type="ECO:0000255" key="2">
    <source>
        <dbReference type="PROSITE-ProRule" id="PRU01115"/>
    </source>
</evidence>
<reference key="1">
    <citation type="journal article" date="2010" name="PLoS Genet.">
        <title>Structure, function, and evolution of the Thiomonas spp. genome.</title>
        <authorList>
            <person name="Arsene-Ploetze F."/>
            <person name="Koechler S."/>
            <person name="Marchal M."/>
            <person name="Coppee J.Y."/>
            <person name="Chandler M."/>
            <person name="Bonnefoy V."/>
            <person name="Brochier-Armanet C."/>
            <person name="Barakat M."/>
            <person name="Barbe V."/>
            <person name="Battaglia-Brunet F."/>
            <person name="Bruneel O."/>
            <person name="Bryan C.G."/>
            <person name="Cleiss-Arnold J."/>
            <person name="Cruveiller S."/>
            <person name="Erhardt M."/>
            <person name="Heinrich-Salmeron A."/>
            <person name="Hommais F."/>
            <person name="Joulian C."/>
            <person name="Krin E."/>
            <person name="Lieutaud A."/>
            <person name="Lievremont D."/>
            <person name="Michel C."/>
            <person name="Muller D."/>
            <person name="Ortet P."/>
            <person name="Proux C."/>
            <person name="Siguier P."/>
            <person name="Roche D."/>
            <person name="Rouy Z."/>
            <person name="Salvignol G."/>
            <person name="Slyemi D."/>
            <person name="Talla E."/>
            <person name="Weiss S."/>
            <person name="Weissenbach J."/>
            <person name="Medigue C."/>
            <person name="Bertin P.N."/>
        </authorList>
    </citation>
    <scope>NUCLEOTIDE SEQUENCE [LARGE SCALE GENOMIC DNA]</scope>
    <source>
        <strain>DSM 22701 / CIP 110005 / 3As</strain>
    </source>
</reference>
<feature type="chain" id="PRO_0000414699" description="Cell division protein FtsQ">
    <location>
        <begin position="1"/>
        <end position="272"/>
    </location>
</feature>
<feature type="topological domain" description="Cytoplasmic" evidence="1">
    <location>
        <begin position="1"/>
        <end position="20"/>
    </location>
</feature>
<feature type="transmembrane region" description="Helical" evidence="1">
    <location>
        <begin position="21"/>
        <end position="40"/>
    </location>
</feature>
<feature type="topological domain" description="Periplasmic" evidence="1">
    <location>
        <begin position="41"/>
        <end position="272"/>
    </location>
</feature>
<feature type="domain" description="POTRA" evidence="2">
    <location>
        <begin position="45"/>
        <end position="114"/>
    </location>
</feature>
<keyword id="KW-0131">Cell cycle</keyword>
<keyword id="KW-0132">Cell division</keyword>
<keyword id="KW-0997">Cell inner membrane</keyword>
<keyword id="KW-1003">Cell membrane</keyword>
<keyword id="KW-0472">Membrane</keyword>
<keyword id="KW-0812">Transmembrane</keyword>
<keyword id="KW-1133">Transmembrane helix</keyword>
<name>FTSQ_THIA3</name>
<accession>D6CRB4</accession>
<proteinExistence type="inferred from homology"/>
<protein>
    <recommendedName>
        <fullName evidence="1">Cell division protein FtsQ</fullName>
    </recommendedName>
</protein>